<dbReference type="EMBL" id="AC005278">
    <property type="protein sequence ID" value="AAC72111.1"/>
    <property type="status" value="ALT_SEQ"/>
    <property type="molecule type" value="Genomic_DNA"/>
</dbReference>
<dbReference type="EMBL" id="CP002684">
    <property type="protein sequence ID" value="AEE27560.1"/>
    <property type="molecule type" value="Genomic_DNA"/>
</dbReference>
<dbReference type="EMBL" id="BT025569">
    <property type="protein sequence ID" value="ABF58987.1"/>
    <property type="molecule type" value="mRNA"/>
</dbReference>
<dbReference type="EMBL" id="AY085777">
    <property type="protein sequence ID" value="AAM62994.1"/>
    <property type="molecule type" value="mRNA"/>
</dbReference>
<dbReference type="PIR" id="H86164">
    <property type="entry name" value="H86164"/>
</dbReference>
<dbReference type="RefSeq" id="NP_563682.1">
    <property type="nucleotide sequence ID" value="NM_100215.4"/>
</dbReference>
<dbReference type="SMR" id="Q1H595"/>
<dbReference type="ComplexPortal" id="CPX-1308">
    <property type="entry name" value="LSM1-7-PAT1 complex, variant LSM1A-LSM3A-LSM6A-PAT1"/>
</dbReference>
<dbReference type="ComplexPortal" id="CPX-1309">
    <property type="entry name" value="LSM2-8 complex, variant LSM3A-LSM6A"/>
</dbReference>
<dbReference type="ComplexPortal" id="CPX-1345">
    <property type="entry name" value="LSM1-7-PAT1 complex, variant LSM1A-LSM3B-LSM6B-PAT1"/>
</dbReference>
<dbReference type="ComplexPortal" id="CPX-1346">
    <property type="entry name" value="LSM1-7-PAT1 complex, variant LSM1A-LSM3B-LSM6A-PAT1"/>
</dbReference>
<dbReference type="ComplexPortal" id="CPX-1347">
    <property type="entry name" value="LSM1-7-PAT1 complex, variant LSM1B-LSM3A-LSM6A-PAT1"/>
</dbReference>
<dbReference type="ComplexPortal" id="CPX-1348">
    <property type="entry name" value="LSM1-7-PAT1 complex, variant LSM1B-LSM3B-LSM6A-PAT1"/>
</dbReference>
<dbReference type="ComplexPortal" id="CPX-1349">
    <property type="entry name" value="LSM1-7-PAT1 complex, variant LSM1B-LSM3B-LSM6B-PAT1"/>
</dbReference>
<dbReference type="ComplexPortal" id="CPX-1350">
    <property type="entry name" value="LSM1-7-PAT1 complex, variant LSM1B-LSM3A-LSM6B-PAT1"/>
</dbReference>
<dbReference type="ComplexPortal" id="CPX-1351">
    <property type="entry name" value="LSM1-7-PAT1 complex, variant LSM1A-LSM3A-LSM6B-PAT1"/>
</dbReference>
<dbReference type="ComplexPortal" id="CPX-1352">
    <property type="entry name" value="LSM2-8 complex, variant LSM3A-LSM6B"/>
</dbReference>
<dbReference type="ComplexPortal" id="CPX-1353">
    <property type="entry name" value="LSM2-8 complex, variant LSM3B-LSM6A"/>
</dbReference>
<dbReference type="ComplexPortal" id="CPX-1354">
    <property type="entry name" value="LSM2-8 complex, variant LSM3B-LSM6B"/>
</dbReference>
<dbReference type="ComplexPortal" id="CPX-1391">
    <property type="entry name" value="LSM1-7-PAT1 complex, variant LSM1A-LSM3A-LSM6A-PAT1H1"/>
</dbReference>
<dbReference type="ComplexPortal" id="CPX-1392">
    <property type="entry name" value="LSM1-7-PAT1 complex, variant LSM1A-LSM3A-LSM6B-PAT1H1"/>
</dbReference>
<dbReference type="ComplexPortal" id="CPX-1393">
    <property type="entry name" value="LSM1-7-PAT1 complex, variant LSM1A-LSM3B-LSM6A-PAT1H1"/>
</dbReference>
<dbReference type="ComplexPortal" id="CPX-1394">
    <property type="entry name" value="LSM1-7-PAT1 complex, variant LSM1A-LSM3B-LSM6B-PAT1H1"/>
</dbReference>
<dbReference type="ComplexPortal" id="CPX-1395">
    <property type="entry name" value="LSM1-7-PAT1 complex, variant LSM1B-LSM3A-LSM6A-PAT1H1"/>
</dbReference>
<dbReference type="ComplexPortal" id="CPX-1396">
    <property type="entry name" value="LSM1-7-PAT1 complex, variant LSM1B-LSM3A-LSM6B-PAT1H1"/>
</dbReference>
<dbReference type="ComplexPortal" id="CPX-1397">
    <property type="entry name" value="LSM1-7-PAT1 complex, variant LSM1B-LSM3B-LSM6A-PAT1H1"/>
</dbReference>
<dbReference type="ComplexPortal" id="CPX-1398">
    <property type="entry name" value="LSM1-7-PAT1 complex, variant LSM1B-LSM3B-LSM6B-PAT1H1"/>
</dbReference>
<dbReference type="ComplexPortal" id="CPX-1399">
    <property type="entry name" value="LSM1-7-PAT1 complex, variant LSM1A-LSM3A-LSM6A-PAT1H2"/>
</dbReference>
<dbReference type="ComplexPortal" id="CPX-1400">
    <property type="entry name" value="LSM1-7-PAT1 complex, variant LSM1A-LSM3A-LSM6B-PAT1H2"/>
</dbReference>
<dbReference type="ComplexPortal" id="CPX-1401">
    <property type="entry name" value="LSM1-7-PAT1 complex, variant LSM1A-LSM3B-LSM6A-PAT1H2"/>
</dbReference>
<dbReference type="ComplexPortal" id="CPX-1402">
    <property type="entry name" value="LSM1-7-PAT1 complex, variant LSM1A-LSM3B-LSM6B-PAT1H2"/>
</dbReference>
<dbReference type="ComplexPortal" id="CPX-1403">
    <property type="entry name" value="LSM1-7-PAT1 complex, variant LSM1B-LSM3A-LSM6A-PAT1H2"/>
</dbReference>
<dbReference type="ComplexPortal" id="CPX-1404">
    <property type="entry name" value="LSM1-7-PAT1 complex, variant LSM1B-LSM3A-LSM6B-PAT1H2"/>
</dbReference>
<dbReference type="ComplexPortal" id="CPX-1405">
    <property type="entry name" value="LSM1-7-PAT1 complex, variant LSM1B-LSM3B-LSM6A-PAT1H2"/>
</dbReference>
<dbReference type="ComplexPortal" id="CPX-1406">
    <property type="entry name" value="LSM1-7-PAT1 complex, variant LSM1B-LSM3B-LSM6B-PAT1H2"/>
</dbReference>
<dbReference type="FunCoup" id="Q1H595">
    <property type="interactions" value="4553"/>
</dbReference>
<dbReference type="IntAct" id="Q1H595">
    <property type="interactions" value="2"/>
</dbReference>
<dbReference type="STRING" id="3702.Q1H595"/>
<dbReference type="PaxDb" id="3702-AT1G03330.1"/>
<dbReference type="ProteomicsDB" id="238802"/>
<dbReference type="EnsemblPlants" id="AT1G03330.1">
    <property type="protein sequence ID" value="AT1G03330.1"/>
    <property type="gene ID" value="AT1G03330"/>
</dbReference>
<dbReference type="GeneID" id="839526"/>
<dbReference type="Gramene" id="AT1G03330.1">
    <property type="protein sequence ID" value="AT1G03330.1"/>
    <property type="gene ID" value="AT1G03330"/>
</dbReference>
<dbReference type="KEGG" id="ath:AT1G03330"/>
<dbReference type="Araport" id="AT1G03330"/>
<dbReference type="TAIR" id="AT1G03330">
    <property type="gene designation" value="LSM2"/>
</dbReference>
<dbReference type="eggNOG" id="KOG3448">
    <property type="taxonomic scope" value="Eukaryota"/>
</dbReference>
<dbReference type="HOGENOM" id="CLU_130474_3_0_1"/>
<dbReference type="InParanoid" id="Q1H595"/>
<dbReference type="OMA" id="DNISCTD"/>
<dbReference type="OrthoDB" id="10256176at2759"/>
<dbReference type="PhylomeDB" id="Q1H595"/>
<dbReference type="CD-CODE" id="4299E36E">
    <property type="entry name" value="Nucleolus"/>
</dbReference>
<dbReference type="PRO" id="PR:Q1H595"/>
<dbReference type="Proteomes" id="UP000006548">
    <property type="component" value="Chromosome 1"/>
</dbReference>
<dbReference type="ExpressionAtlas" id="Q1H595">
    <property type="expression patterns" value="baseline and differential"/>
</dbReference>
<dbReference type="GO" id="GO:1990726">
    <property type="term" value="C:Lsm1-7-Pat1 complex"/>
    <property type="evidence" value="ECO:0000303"/>
    <property type="project" value="ComplexPortal"/>
</dbReference>
<dbReference type="GO" id="GO:0120115">
    <property type="term" value="C:Lsm2-8 complex"/>
    <property type="evidence" value="ECO:0000315"/>
    <property type="project" value="ComplexPortal"/>
</dbReference>
<dbReference type="GO" id="GO:0005634">
    <property type="term" value="C:nucleus"/>
    <property type="evidence" value="ECO:0000314"/>
    <property type="project" value="ComplexPortal"/>
</dbReference>
<dbReference type="GO" id="GO:0000932">
    <property type="term" value="C:P-body"/>
    <property type="evidence" value="ECO:0000303"/>
    <property type="project" value="ComplexPortal"/>
</dbReference>
<dbReference type="GO" id="GO:0005681">
    <property type="term" value="C:spliceosomal complex"/>
    <property type="evidence" value="ECO:0007669"/>
    <property type="project" value="UniProtKB-KW"/>
</dbReference>
<dbReference type="GO" id="GO:0003723">
    <property type="term" value="F:RNA binding"/>
    <property type="evidence" value="ECO:0007669"/>
    <property type="project" value="UniProtKB-KW"/>
</dbReference>
<dbReference type="GO" id="GO:0000290">
    <property type="term" value="P:deadenylation-dependent decapping of nuclear-transcribed mRNA"/>
    <property type="evidence" value="ECO:0000269"/>
    <property type="project" value="ComplexPortal"/>
</dbReference>
<dbReference type="GO" id="GO:0000398">
    <property type="term" value="P:mRNA splicing, via spliceosome"/>
    <property type="evidence" value="ECO:0000315"/>
    <property type="project" value="ComplexPortal"/>
</dbReference>
<dbReference type="CDD" id="cd01725">
    <property type="entry name" value="LSm2"/>
    <property type="match status" value="1"/>
</dbReference>
<dbReference type="FunFam" id="2.30.30.100:FF:000009">
    <property type="entry name" value="U6 snRNA-associated Sm-like protein LSm2"/>
    <property type="match status" value="1"/>
</dbReference>
<dbReference type="Gene3D" id="2.30.30.100">
    <property type="match status" value="1"/>
</dbReference>
<dbReference type="InterPro" id="IPR010920">
    <property type="entry name" value="LSM_dom_sf"/>
</dbReference>
<dbReference type="InterPro" id="IPR047575">
    <property type="entry name" value="Sm"/>
</dbReference>
<dbReference type="InterPro" id="IPR001163">
    <property type="entry name" value="Sm_dom_euk/arc"/>
</dbReference>
<dbReference type="InterPro" id="IPR016654">
    <property type="entry name" value="U6_snRNA_Lsm2"/>
</dbReference>
<dbReference type="PANTHER" id="PTHR13829">
    <property type="entry name" value="SNRNP CORE PROTEIN FAMILY MEMBER"/>
    <property type="match status" value="1"/>
</dbReference>
<dbReference type="PANTHER" id="PTHR13829:SF2">
    <property type="entry name" value="U6 SNRNA-ASSOCIATED SM-LIKE PROTEIN LSM2"/>
    <property type="match status" value="1"/>
</dbReference>
<dbReference type="Pfam" id="PF01423">
    <property type="entry name" value="LSM"/>
    <property type="match status" value="1"/>
</dbReference>
<dbReference type="PIRSF" id="PIRSF016394">
    <property type="entry name" value="U6_snRNA_Lsm2"/>
    <property type="match status" value="1"/>
</dbReference>
<dbReference type="SMART" id="SM00651">
    <property type="entry name" value="Sm"/>
    <property type="match status" value="1"/>
</dbReference>
<dbReference type="SUPFAM" id="SSF50182">
    <property type="entry name" value="Sm-like ribonucleoproteins"/>
    <property type="match status" value="1"/>
</dbReference>
<dbReference type="PROSITE" id="PS52002">
    <property type="entry name" value="SM"/>
    <property type="match status" value="1"/>
</dbReference>
<accession>Q1H595</accession>
<accession>Q8L5U6</accession>
<accession>Q9ZVT4</accession>
<keyword id="KW-0963">Cytoplasm</keyword>
<keyword id="KW-0507">mRNA processing</keyword>
<keyword id="KW-0508">mRNA splicing</keyword>
<keyword id="KW-0539">Nucleus</keyword>
<keyword id="KW-1185">Reference proteome</keyword>
<keyword id="KW-0687">Ribonucleoprotein</keyword>
<keyword id="KW-0694">RNA-binding</keyword>
<keyword id="KW-0747">Spliceosome</keyword>
<evidence type="ECO:0000255" key="1">
    <source>
        <dbReference type="PROSITE-ProRule" id="PRU01346"/>
    </source>
</evidence>
<evidence type="ECO:0000269" key="2">
    <source>
    </source>
</evidence>
<evidence type="ECO:0000269" key="3">
    <source>
    </source>
</evidence>
<evidence type="ECO:0000303" key="4">
    <source>
    </source>
</evidence>
<evidence type="ECO:0000303" key="5">
    <source>
    </source>
</evidence>
<evidence type="ECO:0000305" key="6"/>
<evidence type="ECO:0000305" key="7">
    <source>
    </source>
</evidence>
<evidence type="ECO:0000312" key="8">
    <source>
        <dbReference type="Araport" id="AT1G03330"/>
    </source>
</evidence>
<evidence type="ECO:0000312" key="9">
    <source>
        <dbReference type="EMBL" id="AAC72111.1"/>
    </source>
</evidence>
<feature type="chain" id="PRO_0000431643" description="Sm-like protein LSM2">
    <location>
        <begin position="1"/>
        <end position="93"/>
    </location>
</feature>
<feature type="domain" description="Sm" evidence="1">
    <location>
        <begin position="2"/>
        <end position="76"/>
    </location>
</feature>
<feature type="sequence conflict" description="In Ref. 4; AAM62994." evidence="6" ref="4">
    <original>D</original>
    <variation>G</variation>
    <location>
        <position position="84"/>
    </location>
</feature>
<organism>
    <name type="scientific">Arabidopsis thaliana</name>
    <name type="common">Mouse-ear cress</name>
    <dbReference type="NCBI Taxonomy" id="3702"/>
    <lineage>
        <taxon>Eukaryota</taxon>
        <taxon>Viridiplantae</taxon>
        <taxon>Streptophyta</taxon>
        <taxon>Embryophyta</taxon>
        <taxon>Tracheophyta</taxon>
        <taxon>Spermatophyta</taxon>
        <taxon>Magnoliopsida</taxon>
        <taxon>eudicotyledons</taxon>
        <taxon>Gunneridae</taxon>
        <taxon>Pentapetalae</taxon>
        <taxon>rosids</taxon>
        <taxon>malvids</taxon>
        <taxon>Brassicales</taxon>
        <taxon>Brassicaceae</taxon>
        <taxon>Camelineae</taxon>
        <taxon>Arabidopsis</taxon>
    </lineage>
</organism>
<sequence length="93" mass="10694">MLFFSYFKDLVGQEVTVELKNDLAIRGTLHSVDQYLNIKLENTRVVDQDKYPHMLSVRNCFIRGSVVRYVQLPKDGVDVDLLHDAARREARGG</sequence>
<proteinExistence type="evidence at protein level"/>
<gene>
    <name evidence="4" type="primary">LSM2</name>
    <name evidence="8" type="ordered locus">At1g03330</name>
    <name evidence="9" type="ORF">F15K9.7</name>
</gene>
<comment type="function">
    <text evidence="2 3">Component of LSM protein complexes, which are involved in RNA processing. Component of the cytoplasmic LSM1-LSM7 complex which is involved in mRNA degradation by promoting decapping and leading to accurate 5'-3' mRNA decay. The cytoplasmic LSM1-LSM7 complex regulates developmental gene expression by the decapping of specific development-related transcripts. Component of the nuclear LSM2-LSM8 complex which is involved splicing nuclear mRNAs. LSM2-LSM8 binds directly to the U6 small nuclear RNAs (snRNAs) and is essential for accurate splicing of selected development-related mRNAs through the stabilization of the spliceosomal U6 snRNA. Plays a critical role in the regulation of development-related gene expression.</text>
</comment>
<comment type="subunit">
    <text evidence="2 3">Component of the heptameric LSM1-LSM7 complex that forms a seven-membered ring structure with a donut shape. The LSM subunits are arranged in the order LSM1, LSM2, LSM3, LSM6, LSM5, LSM7 and LSM4 (PubMed:23221597, PubMed:23620288). LSM2 subunit interacts only with its two neighboring subunits, LSM1A or LSM1B and LSM3A or LSM3B (PubMed:23221597). Component of the heptameric LSM2-LSM8 complex that forms a seven-membered ring structure with a donut shape. The LSM subunits are arranged in the order LSM8, LSM2, LSM3, LSM6, LSM5, LSM7 and LSM4 (PubMed:23221597, PubMed:23620288). LSM2 subunit interacts only with its two neighboring subunits, LSM8 and LSM3A or LSM3B (PubMed:23221597).</text>
</comment>
<comment type="interaction">
    <interactant intactId="EBI-9347308">
        <id>Q1H595</id>
    </interactant>
    <interactant intactId="EBI-4426649">
        <id>Q17TI5</id>
        <label>BRX</label>
    </interactant>
    <organismsDiffer>false</organismsDiffer>
    <experiments>3</experiments>
</comment>
<comment type="subcellular location">
    <subcellularLocation>
        <location evidence="2">Cytoplasm</location>
    </subcellularLocation>
    <subcellularLocation>
        <location evidence="2">Nucleus</location>
    </subcellularLocation>
</comment>
<comment type="tissue specificity">
    <text evidence="2 3">Expressed in roots, leaves, stems, flowers and siliques.</text>
</comment>
<comment type="disruption phenotype">
    <text evidence="7">Embryonic lethality when homozygous.</text>
</comment>
<comment type="similarity">
    <text evidence="6">Belongs to the snRNP Sm proteins family.</text>
</comment>
<comment type="sequence caution" evidence="6">
    <conflict type="erroneous gene model prediction">
        <sequence resource="EMBL-CDS" id="AAC72111"/>
    </conflict>
</comment>
<name>LSM2_ARATH</name>
<protein>
    <recommendedName>
        <fullName evidence="6">Sm-like protein LSM2</fullName>
        <shortName evidence="5">AtLSM2</shortName>
    </recommendedName>
    <alternativeName>
        <fullName evidence="6">U6 snRNA-associated Sm-like protein LSM2</fullName>
    </alternativeName>
</protein>
<reference key="1">
    <citation type="journal article" date="2000" name="Nature">
        <title>Sequence and analysis of chromosome 1 of the plant Arabidopsis thaliana.</title>
        <authorList>
            <person name="Theologis A."/>
            <person name="Ecker J.R."/>
            <person name="Palm C.J."/>
            <person name="Federspiel N.A."/>
            <person name="Kaul S."/>
            <person name="White O."/>
            <person name="Alonso J."/>
            <person name="Altafi H."/>
            <person name="Araujo R."/>
            <person name="Bowman C.L."/>
            <person name="Brooks S.Y."/>
            <person name="Buehler E."/>
            <person name="Chan A."/>
            <person name="Chao Q."/>
            <person name="Chen H."/>
            <person name="Cheuk R.F."/>
            <person name="Chin C.W."/>
            <person name="Chung M.K."/>
            <person name="Conn L."/>
            <person name="Conway A.B."/>
            <person name="Conway A.R."/>
            <person name="Creasy T.H."/>
            <person name="Dewar K."/>
            <person name="Dunn P."/>
            <person name="Etgu P."/>
            <person name="Feldblyum T.V."/>
            <person name="Feng J.-D."/>
            <person name="Fong B."/>
            <person name="Fujii C.Y."/>
            <person name="Gill J.E."/>
            <person name="Goldsmith A.D."/>
            <person name="Haas B."/>
            <person name="Hansen N.F."/>
            <person name="Hughes B."/>
            <person name="Huizar L."/>
            <person name="Hunter J.L."/>
            <person name="Jenkins J."/>
            <person name="Johnson-Hopson C."/>
            <person name="Khan S."/>
            <person name="Khaykin E."/>
            <person name="Kim C.J."/>
            <person name="Koo H.L."/>
            <person name="Kremenetskaia I."/>
            <person name="Kurtz D.B."/>
            <person name="Kwan A."/>
            <person name="Lam B."/>
            <person name="Langin-Hooper S."/>
            <person name="Lee A."/>
            <person name="Lee J.M."/>
            <person name="Lenz C.A."/>
            <person name="Li J.H."/>
            <person name="Li Y.-P."/>
            <person name="Lin X."/>
            <person name="Liu S.X."/>
            <person name="Liu Z.A."/>
            <person name="Luros J.S."/>
            <person name="Maiti R."/>
            <person name="Marziali A."/>
            <person name="Militscher J."/>
            <person name="Miranda M."/>
            <person name="Nguyen M."/>
            <person name="Nierman W.C."/>
            <person name="Osborne B.I."/>
            <person name="Pai G."/>
            <person name="Peterson J."/>
            <person name="Pham P.K."/>
            <person name="Rizzo M."/>
            <person name="Rooney T."/>
            <person name="Rowley D."/>
            <person name="Sakano H."/>
            <person name="Salzberg S.L."/>
            <person name="Schwartz J.R."/>
            <person name="Shinn P."/>
            <person name="Southwick A.M."/>
            <person name="Sun H."/>
            <person name="Tallon L.J."/>
            <person name="Tambunga G."/>
            <person name="Toriumi M.J."/>
            <person name="Town C.D."/>
            <person name="Utterback T."/>
            <person name="Van Aken S."/>
            <person name="Vaysberg M."/>
            <person name="Vysotskaia V.S."/>
            <person name="Walker M."/>
            <person name="Wu D."/>
            <person name="Yu G."/>
            <person name="Fraser C.M."/>
            <person name="Venter J.C."/>
            <person name="Davis R.W."/>
        </authorList>
    </citation>
    <scope>NUCLEOTIDE SEQUENCE [LARGE SCALE GENOMIC DNA]</scope>
    <source>
        <strain>cv. Columbia</strain>
    </source>
</reference>
<reference key="2">
    <citation type="journal article" date="2017" name="Plant J.">
        <title>Araport11: a complete reannotation of the Arabidopsis thaliana reference genome.</title>
        <authorList>
            <person name="Cheng C.Y."/>
            <person name="Krishnakumar V."/>
            <person name="Chan A.P."/>
            <person name="Thibaud-Nissen F."/>
            <person name="Schobel S."/>
            <person name="Town C.D."/>
        </authorList>
    </citation>
    <scope>GENOME REANNOTATION</scope>
    <source>
        <strain>cv. Columbia</strain>
    </source>
</reference>
<reference key="3">
    <citation type="submission" date="2006-05" db="EMBL/GenBank/DDBJ databases">
        <title>Arabidopsis ORF clones.</title>
        <authorList>
            <person name="Quinitio C."/>
            <person name="Chen H."/>
            <person name="Kim C.J."/>
            <person name="Shinn P."/>
            <person name="Ecker J.R."/>
        </authorList>
    </citation>
    <scope>NUCLEOTIDE SEQUENCE [LARGE SCALE MRNA]</scope>
    <source>
        <strain>cv. Columbia</strain>
    </source>
</reference>
<reference key="4">
    <citation type="submission" date="2002-03" db="EMBL/GenBank/DDBJ databases">
        <title>Full-length cDNA from Arabidopsis thaliana.</title>
        <authorList>
            <person name="Brover V.V."/>
            <person name="Troukhan M.E."/>
            <person name="Alexandrov N.A."/>
            <person name="Lu Y.-P."/>
            <person name="Flavell R.B."/>
            <person name="Feldmann K.A."/>
        </authorList>
    </citation>
    <scope>NUCLEOTIDE SEQUENCE [LARGE SCALE MRNA]</scope>
</reference>
<reference key="5">
    <citation type="journal article" date="2012" name="Plant Cell">
        <title>LSM proteins provide accurate splicing and decay of selected transcripts to ensure normal Arabidopsis development.</title>
        <authorList>
            <person name="Perea-Resa C."/>
            <person name="Hernandez-Verdeja T."/>
            <person name="Lopez-Cobollo R."/>
            <person name="del Mar Castellano M."/>
            <person name="Salinas J."/>
        </authorList>
    </citation>
    <scope>FUNCTION</scope>
    <scope>INTERACTION WITH LSM1A; LSM3A; LSM3B AND LSM8</scope>
    <scope>SUBCELLULAR LOCATION</scope>
    <scope>TISSUE SPECIFICITY</scope>
    <scope>GENE FAMILY</scope>
    <scope>DISRUPTION PHENOTYPE</scope>
</reference>
<reference key="6">
    <citation type="journal article" date="2013" name="Nucleic Acids Res.">
        <title>Arabidopsis thaliana LSM proteins function in mRNA splicing and degradation.</title>
        <authorList>
            <person name="Golisz A."/>
            <person name="Sikorski P.J."/>
            <person name="Kruszka K."/>
            <person name="Kufel J."/>
        </authorList>
    </citation>
    <scope>IDENTIFICATION BY MASS SPECTROMETRY</scope>
    <scope>FUNCTION</scope>
    <scope>SUBUNIT</scope>
    <scope>TISSUE SPECIFICITY</scope>
</reference>